<reference key="1">
    <citation type="journal article" date="2007" name="Nature">
        <title>Evolution of genes and genomes on the Drosophila phylogeny.</title>
        <authorList>
            <consortium name="Drosophila 12 genomes consortium"/>
        </authorList>
    </citation>
    <scope>NUCLEOTIDE SEQUENCE [LARGE SCALE GENOMIC DNA]</scope>
    <source>
        <strain>Tucson 15287-2541.00</strain>
    </source>
</reference>
<protein>
    <recommendedName>
        <fullName evidence="2">Ribosome-releasing factor 2, mitochondrial</fullName>
        <shortName evidence="2">RRF2mt</shortName>
    </recommendedName>
    <alternativeName>
        <fullName evidence="2">Elongation factor G 2, mitochondrial</fullName>
        <shortName evidence="2">EF-G2mt</shortName>
        <shortName evidence="2">mEF-G 2</shortName>
    </alternativeName>
</protein>
<comment type="function">
    <text evidence="2">Mitochondrial GTPase that mediates the disassembly of ribosomes from messenger RNA at the termination of mitochondrial protein biosynthesis. Not involved in the GTP-dependent ribosomal translocation step during translation elongation.</text>
</comment>
<comment type="subcellular location">
    <subcellularLocation>
        <location evidence="2">Mitochondrion</location>
    </subcellularLocation>
</comment>
<comment type="similarity">
    <text evidence="2">Belongs to the TRAFAC class translation factor GTPase superfamily. Classic translation factor GTPase family. EF-G/EF-2 subfamily.</text>
</comment>
<dbReference type="EMBL" id="CH916373">
    <property type="protein sequence ID" value="EDV94723.1"/>
    <property type="molecule type" value="Genomic_DNA"/>
</dbReference>
<dbReference type="SMR" id="B4JSI3"/>
<dbReference type="FunCoup" id="B4JSI3">
    <property type="interactions" value="488"/>
</dbReference>
<dbReference type="STRING" id="7222.B4JSI3"/>
<dbReference type="EnsemblMetazoa" id="FBtr0157882">
    <property type="protein sequence ID" value="FBpp0156374"/>
    <property type="gene ID" value="FBgn0129926"/>
</dbReference>
<dbReference type="EnsemblMetazoa" id="XM_001993951.2">
    <property type="protein sequence ID" value="XP_001993987.1"/>
    <property type="gene ID" value="LOC6567460"/>
</dbReference>
<dbReference type="GeneID" id="6567460"/>
<dbReference type="KEGG" id="dgr:6567460"/>
<dbReference type="CTD" id="42670"/>
<dbReference type="eggNOG" id="KOG0464">
    <property type="taxonomic scope" value="Eukaryota"/>
</dbReference>
<dbReference type="HOGENOM" id="CLU_002794_4_1_1"/>
<dbReference type="InParanoid" id="B4JSI3"/>
<dbReference type="OMA" id="GPQFTFP"/>
<dbReference type="OrthoDB" id="198619at2759"/>
<dbReference type="PhylomeDB" id="B4JSI3"/>
<dbReference type="Proteomes" id="UP000001070">
    <property type="component" value="Unassembled WGS sequence"/>
</dbReference>
<dbReference type="GO" id="GO:0005739">
    <property type="term" value="C:mitochondrion"/>
    <property type="evidence" value="ECO:0007669"/>
    <property type="project" value="UniProtKB-SubCell"/>
</dbReference>
<dbReference type="GO" id="GO:0005525">
    <property type="term" value="F:GTP binding"/>
    <property type="evidence" value="ECO:0007669"/>
    <property type="project" value="UniProtKB-UniRule"/>
</dbReference>
<dbReference type="GO" id="GO:0003924">
    <property type="term" value="F:GTPase activity"/>
    <property type="evidence" value="ECO:0000250"/>
    <property type="project" value="UniProtKB"/>
</dbReference>
<dbReference type="GO" id="GO:0032543">
    <property type="term" value="P:mitochondrial translation"/>
    <property type="evidence" value="ECO:0000250"/>
    <property type="project" value="UniProtKB"/>
</dbReference>
<dbReference type="GO" id="GO:0032790">
    <property type="term" value="P:ribosome disassembly"/>
    <property type="evidence" value="ECO:0000250"/>
    <property type="project" value="UniProtKB"/>
</dbReference>
<dbReference type="CDD" id="cd16262">
    <property type="entry name" value="EFG_III"/>
    <property type="match status" value="1"/>
</dbReference>
<dbReference type="CDD" id="cd03713">
    <property type="entry name" value="EFG_mtEFG_C"/>
    <property type="match status" value="1"/>
</dbReference>
<dbReference type="FunFam" id="3.30.70.240:FF:000001">
    <property type="entry name" value="Elongation factor G"/>
    <property type="match status" value="1"/>
</dbReference>
<dbReference type="FunFam" id="2.40.30.10:FF:000286">
    <property type="entry name" value="Ribosome-releasing factor 2, mitochondrial"/>
    <property type="match status" value="1"/>
</dbReference>
<dbReference type="FunFam" id="3.30.230.10:FF:000033">
    <property type="entry name" value="Ribosome-releasing factor 2, mitochondrial"/>
    <property type="match status" value="1"/>
</dbReference>
<dbReference type="FunFam" id="3.30.70.870:FF:000005">
    <property type="entry name" value="Ribosome-releasing factor 2, mitochondrial"/>
    <property type="match status" value="1"/>
</dbReference>
<dbReference type="FunFam" id="3.40.50.300:FF:000514">
    <property type="entry name" value="Ribosome-releasing factor 2, mitochondrial"/>
    <property type="match status" value="1"/>
</dbReference>
<dbReference type="Gene3D" id="3.30.230.10">
    <property type="match status" value="1"/>
</dbReference>
<dbReference type="Gene3D" id="3.30.70.240">
    <property type="match status" value="1"/>
</dbReference>
<dbReference type="Gene3D" id="3.30.70.870">
    <property type="entry name" value="Elongation Factor G (Translational Gtpase), domain 3"/>
    <property type="match status" value="1"/>
</dbReference>
<dbReference type="Gene3D" id="3.40.50.300">
    <property type="entry name" value="P-loop containing nucleotide triphosphate hydrolases"/>
    <property type="match status" value="1"/>
</dbReference>
<dbReference type="Gene3D" id="2.40.30.10">
    <property type="entry name" value="Translation factors"/>
    <property type="match status" value="1"/>
</dbReference>
<dbReference type="HAMAP" id="MF_03059">
    <property type="entry name" value="mEF_G_2"/>
    <property type="match status" value="1"/>
</dbReference>
<dbReference type="InterPro" id="IPR053905">
    <property type="entry name" value="EF-G-like_DII"/>
</dbReference>
<dbReference type="InterPro" id="IPR030851">
    <property type="entry name" value="EFG2"/>
</dbReference>
<dbReference type="InterPro" id="IPR041095">
    <property type="entry name" value="EFG_II"/>
</dbReference>
<dbReference type="InterPro" id="IPR009022">
    <property type="entry name" value="EFG_III"/>
</dbReference>
<dbReference type="InterPro" id="IPR035647">
    <property type="entry name" value="EFG_III/V"/>
</dbReference>
<dbReference type="InterPro" id="IPR035649">
    <property type="entry name" value="EFG_V"/>
</dbReference>
<dbReference type="InterPro" id="IPR000640">
    <property type="entry name" value="EFG_V-like"/>
</dbReference>
<dbReference type="InterPro" id="IPR031157">
    <property type="entry name" value="G_TR_CS"/>
</dbReference>
<dbReference type="InterPro" id="IPR027417">
    <property type="entry name" value="P-loop_NTPase"/>
</dbReference>
<dbReference type="InterPro" id="IPR020568">
    <property type="entry name" value="Ribosomal_Su5_D2-typ_SF"/>
</dbReference>
<dbReference type="InterPro" id="IPR014721">
    <property type="entry name" value="Ribsml_uS5_D2-typ_fold_subgr"/>
</dbReference>
<dbReference type="InterPro" id="IPR005225">
    <property type="entry name" value="Small_GTP-bd"/>
</dbReference>
<dbReference type="InterPro" id="IPR000795">
    <property type="entry name" value="T_Tr_GTP-bd_dom"/>
</dbReference>
<dbReference type="InterPro" id="IPR009000">
    <property type="entry name" value="Transl_B-barrel_sf"/>
</dbReference>
<dbReference type="NCBIfam" id="TIGR00231">
    <property type="entry name" value="small_GTP"/>
    <property type="match status" value="1"/>
</dbReference>
<dbReference type="PANTHER" id="PTHR43261:SF1">
    <property type="entry name" value="RIBOSOME-RELEASING FACTOR 2, MITOCHONDRIAL"/>
    <property type="match status" value="1"/>
</dbReference>
<dbReference type="PANTHER" id="PTHR43261">
    <property type="entry name" value="TRANSLATION ELONGATION FACTOR G-RELATED"/>
    <property type="match status" value="1"/>
</dbReference>
<dbReference type="Pfam" id="PF22042">
    <property type="entry name" value="EF-G_D2"/>
    <property type="match status" value="1"/>
</dbReference>
<dbReference type="Pfam" id="PF00679">
    <property type="entry name" value="EFG_C"/>
    <property type="match status" value="1"/>
</dbReference>
<dbReference type="Pfam" id="PF14492">
    <property type="entry name" value="EFG_III"/>
    <property type="match status" value="1"/>
</dbReference>
<dbReference type="Pfam" id="PF00009">
    <property type="entry name" value="GTP_EFTU"/>
    <property type="match status" value="1"/>
</dbReference>
<dbReference type="PRINTS" id="PR00315">
    <property type="entry name" value="ELONGATNFCT"/>
</dbReference>
<dbReference type="SMART" id="SM00838">
    <property type="entry name" value="EFG_C"/>
    <property type="match status" value="1"/>
</dbReference>
<dbReference type="SUPFAM" id="SSF54980">
    <property type="entry name" value="EF-G C-terminal domain-like"/>
    <property type="match status" value="2"/>
</dbReference>
<dbReference type="SUPFAM" id="SSF52540">
    <property type="entry name" value="P-loop containing nucleoside triphosphate hydrolases"/>
    <property type="match status" value="1"/>
</dbReference>
<dbReference type="SUPFAM" id="SSF54211">
    <property type="entry name" value="Ribosomal protein S5 domain 2-like"/>
    <property type="match status" value="1"/>
</dbReference>
<dbReference type="SUPFAM" id="SSF50447">
    <property type="entry name" value="Translation proteins"/>
    <property type="match status" value="1"/>
</dbReference>
<dbReference type="PROSITE" id="PS00301">
    <property type="entry name" value="G_TR_1"/>
    <property type="match status" value="1"/>
</dbReference>
<dbReference type="PROSITE" id="PS51722">
    <property type="entry name" value="G_TR_2"/>
    <property type="match status" value="1"/>
</dbReference>
<gene>
    <name evidence="1" type="primary">mRRF2</name>
    <name evidence="1" type="synonym">EF-G2</name>
    <name type="ORF">GH22468</name>
</gene>
<accession>B4JSI3</accession>
<evidence type="ECO:0000250" key="1">
    <source>
        <dbReference type="UniProtKB" id="Q9VCX4"/>
    </source>
</evidence>
<evidence type="ECO:0000255" key="2">
    <source>
        <dbReference type="HAMAP-Rule" id="MF_03059"/>
    </source>
</evidence>
<keyword id="KW-0342">GTP-binding</keyword>
<keyword id="KW-0496">Mitochondrion</keyword>
<keyword id="KW-0547">Nucleotide-binding</keyword>
<keyword id="KW-0648">Protein biosynthesis</keyword>
<keyword id="KW-1185">Reference proteome</keyword>
<keyword id="KW-0809">Transit peptide</keyword>
<sequence length="734" mass="81007">MLQYCLLRRYRFLLRQHAQVIKRCYSGDIRNIGILAHIDAGKTTTTERMLFYAGKTRSLGEVHRGNTVTDYLAQERERGITICSSAVTFNWNGKRINLLDTPGHIDFTMEVEQSLYAVDGVIVVLDGTAGVEAQTVTVWTQADKHKLPRLVFVNKMDRPDANFEKCIVDLTEKLDAKPICTQYPTKSADGQLGIFDVITMEQMTWQQNDLGRNYSKVKLESSTELQEKRNELIDQLSGLDDELADVVISTESFDKVSNELIGQALRRATCQQKVVPVLLGSAYKNIGIQPLMDAVNAYLPMPEERNQMYDCFGNDFAGKVFKIVHDKQRGPLTLVRLLRGELKRGMRLLCSARGQAEVVSKIYEPLADEYREVGSMQAGDVAICAGLKSTVTGDLLTSSHTSLKNAQKRLLQSRGAAMPQDEDEVLDDASHELFSIEPKIPDAVYFCSIEPPSISSQTAMEQALKQLQREDPSLRVSYDSVTGQTVLGGMGELHMDIIKSRMLSEYKIDVDLGPLQIAYKETLGSSAITTLSVDKDIAGSKQSVSITLQLVSDQRELFSLDKSPENVQHLNALRPRILGVLRKGAVSALERGPRVGGQVVDTQIRLHNVTVGRGTADSFVMAAAAQCVQKLLITSGTRLLEPIMAIQIVAPNERISGIMADLSRRRALIRDVTSKGDRNKIILVNAPLAELSGYSSALRTISSGTASMTMQPCGFSEMNTADESLAVRRAQGLD</sequence>
<feature type="transit peptide" description="Mitochondrion" evidence="2">
    <location>
        <begin position="1"/>
        <end position="25"/>
    </location>
</feature>
<feature type="chain" id="PRO_0000385600" description="Ribosome-releasing factor 2, mitochondrial">
    <location>
        <begin position="26"/>
        <end position="734"/>
    </location>
</feature>
<feature type="domain" description="tr-type G">
    <location>
        <begin position="27"/>
        <end position="303"/>
    </location>
</feature>
<feature type="binding site" evidence="2">
    <location>
        <begin position="36"/>
        <end position="43"/>
    </location>
    <ligand>
        <name>GTP</name>
        <dbReference type="ChEBI" id="CHEBI:37565"/>
    </ligand>
</feature>
<feature type="binding site" evidence="2">
    <location>
        <begin position="100"/>
        <end position="104"/>
    </location>
    <ligand>
        <name>GTP</name>
        <dbReference type="ChEBI" id="CHEBI:37565"/>
    </ligand>
</feature>
<feature type="binding site" evidence="2">
    <location>
        <begin position="154"/>
        <end position="157"/>
    </location>
    <ligand>
        <name>GTP</name>
        <dbReference type="ChEBI" id="CHEBI:37565"/>
    </ligand>
</feature>
<name>RRF2M_DROGR</name>
<proteinExistence type="inferred from homology"/>
<organism>
    <name type="scientific">Drosophila grimshawi</name>
    <name type="common">Hawaiian fruit fly</name>
    <name type="synonym">Idiomyia grimshawi</name>
    <dbReference type="NCBI Taxonomy" id="7222"/>
    <lineage>
        <taxon>Eukaryota</taxon>
        <taxon>Metazoa</taxon>
        <taxon>Ecdysozoa</taxon>
        <taxon>Arthropoda</taxon>
        <taxon>Hexapoda</taxon>
        <taxon>Insecta</taxon>
        <taxon>Pterygota</taxon>
        <taxon>Neoptera</taxon>
        <taxon>Endopterygota</taxon>
        <taxon>Diptera</taxon>
        <taxon>Brachycera</taxon>
        <taxon>Muscomorpha</taxon>
        <taxon>Ephydroidea</taxon>
        <taxon>Drosophilidae</taxon>
        <taxon>Drosophila</taxon>
        <taxon>Hawaiian Drosophila</taxon>
    </lineage>
</organism>